<accession>A4F267</accession>
<dbReference type="EMBL" id="AB274732">
    <property type="protein sequence ID" value="BAF49085.1"/>
    <property type="molecule type" value="mRNA"/>
</dbReference>
<dbReference type="RefSeq" id="NP_001076807.1">
    <property type="nucleotide sequence ID" value="NM_001083338.2"/>
</dbReference>
<dbReference type="RefSeq" id="XP_006250309.1">
    <property type="nucleotide sequence ID" value="XM_006250247.3"/>
</dbReference>
<dbReference type="SMR" id="A4F267"/>
<dbReference type="BioGRID" id="258038">
    <property type="interactions" value="1"/>
</dbReference>
<dbReference type="FunCoup" id="A4F267">
    <property type="interactions" value="1594"/>
</dbReference>
<dbReference type="STRING" id="10116.ENSRNOP00000004641"/>
<dbReference type="PhosphoSitePlus" id="A4F267"/>
<dbReference type="SwissPalm" id="A4F267"/>
<dbReference type="PaxDb" id="10116-ENSRNOP00000004641"/>
<dbReference type="PeptideAtlas" id="A4F267"/>
<dbReference type="Ensembl" id="ENSRNOT00000004641.4">
    <property type="protein sequence ID" value="ENSRNOP00000004641.1"/>
    <property type="gene ID" value="ENSRNOG00000003398.4"/>
</dbReference>
<dbReference type="GeneID" id="304971"/>
<dbReference type="KEGG" id="rno:304971"/>
<dbReference type="UCSC" id="RGD:1562006">
    <property type="organism name" value="rat"/>
</dbReference>
<dbReference type="AGR" id="RGD:1562006"/>
<dbReference type="CTD" id="84134"/>
<dbReference type="RGD" id="1562006">
    <property type="gene designation" value="Tomm40l"/>
</dbReference>
<dbReference type="eggNOG" id="KOG3296">
    <property type="taxonomic scope" value="Eukaryota"/>
</dbReference>
<dbReference type="GeneTree" id="ENSGT00390000003308"/>
<dbReference type="HOGENOM" id="CLU_054399_0_0_1"/>
<dbReference type="InParanoid" id="A4F267"/>
<dbReference type="OMA" id="WTEMGNT"/>
<dbReference type="OrthoDB" id="19656at2759"/>
<dbReference type="PhylomeDB" id="A4F267"/>
<dbReference type="TreeFam" id="TF106204"/>
<dbReference type="PRO" id="PR:A4F267"/>
<dbReference type="Proteomes" id="UP000002494">
    <property type="component" value="Chromosome 13"/>
</dbReference>
<dbReference type="Bgee" id="ENSRNOG00000003398">
    <property type="expression patterns" value="Expressed in heart and 19 other cell types or tissues"/>
</dbReference>
<dbReference type="GO" id="GO:0005742">
    <property type="term" value="C:mitochondrial outer membrane translocase complex"/>
    <property type="evidence" value="ECO:0000314"/>
    <property type="project" value="RGD"/>
</dbReference>
<dbReference type="GO" id="GO:0030943">
    <property type="term" value="F:mitochondrion targeting sequence binding"/>
    <property type="evidence" value="ECO:0000314"/>
    <property type="project" value="RGD"/>
</dbReference>
<dbReference type="GO" id="GO:0070678">
    <property type="term" value="F:preprotein binding"/>
    <property type="evidence" value="ECO:0000314"/>
    <property type="project" value="RGD"/>
</dbReference>
<dbReference type="GO" id="GO:0008320">
    <property type="term" value="F:protein transmembrane transporter activity"/>
    <property type="evidence" value="ECO:0000318"/>
    <property type="project" value="GO_Central"/>
</dbReference>
<dbReference type="GO" id="GO:0030150">
    <property type="term" value="P:protein import into mitochondrial matrix"/>
    <property type="evidence" value="ECO:0000318"/>
    <property type="project" value="GO_Central"/>
</dbReference>
<dbReference type="CDD" id="cd07305">
    <property type="entry name" value="Porin3_Tom40"/>
    <property type="match status" value="1"/>
</dbReference>
<dbReference type="FunFam" id="2.40.160.10:FF:000005">
    <property type="entry name" value="mitochondrial import receptor subunit TOM40 homolog"/>
    <property type="match status" value="1"/>
</dbReference>
<dbReference type="Gene3D" id="2.40.160.10">
    <property type="entry name" value="Porin"/>
    <property type="match status" value="1"/>
</dbReference>
<dbReference type="InterPro" id="IPR023614">
    <property type="entry name" value="Porin_dom_sf"/>
</dbReference>
<dbReference type="InterPro" id="IPR027246">
    <property type="entry name" value="Porin_Euk/Tom40"/>
</dbReference>
<dbReference type="InterPro" id="IPR037930">
    <property type="entry name" value="Tom40"/>
</dbReference>
<dbReference type="PANTHER" id="PTHR10802">
    <property type="entry name" value="MITOCHONDRIAL IMPORT RECEPTOR SUBUNIT TOM40"/>
    <property type="match status" value="1"/>
</dbReference>
<dbReference type="Pfam" id="PF01459">
    <property type="entry name" value="Porin_3"/>
    <property type="match status" value="1"/>
</dbReference>
<proteinExistence type="evidence at protein level"/>
<protein>
    <recommendedName>
        <fullName>Mitochondrial import receptor subunit TOM40B</fullName>
    </recommendedName>
    <alternativeName>
        <fullName>Protein TOMM40-like</fullName>
    </alternativeName>
</protein>
<keyword id="KW-0472">Membrane</keyword>
<keyword id="KW-0496">Mitochondrion</keyword>
<keyword id="KW-1000">Mitochondrion outer membrane</keyword>
<keyword id="KW-0653">Protein transport</keyword>
<keyword id="KW-1185">Reference proteome</keyword>
<keyword id="KW-0812">Transmembrane</keyword>
<keyword id="KW-1134">Transmembrane beta strand</keyword>
<keyword id="KW-0813">Transport</keyword>
<comment type="function">
    <text evidence="3">Potential channel-forming protein implicated in import of protein precursors into mitochondria.</text>
</comment>
<comment type="subunit">
    <text evidence="3">Forms part of the preprotein translocase of the outer mitochondrial membrane (TOM complex) containing TOMM22, TOMM40, TOMM40L and TOMM70. Interacts with mitochondrial targeting sequences.</text>
</comment>
<comment type="subcellular location">
    <subcellularLocation>
        <location evidence="3">Mitochondrion outer membrane</location>
        <topology evidence="3">Multi-pass membrane protein</topology>
    </subcellularLocation>
</comment>
<comment type="tissue specificity">
    <text evidence="3">Widely expressed. Higher levels in heart, brain and liver, very low level in testis.</text>
</comment>
<comment type="similarity">
    <text evidence="2">Belongs to the Tom40 family.</text>
</comment>
<reference evidence="4 5" key="1">
    <citation type="journal article" date="2007" name="J. Biochem.">
        <title>Identification and characterization of a new Tom40 isoform, a central component of mitochondrial outer membrane translocase.</title>
        <authorList>
            <person name="Kinoshita J.Y."/>
            <person name="Mihara K."/>
            <person name="Oka T."/>
        </authorList>
    </citation>
    <scope>NUCLEOTIDE SEQUENCE [MRNA]</scope>
    <scope>FUNCTION</scope>
    <scope>IDENTIFICATION IN THE TOM COMPLEX WITH TOMM40; TOMM22 AND TOMM70</scope>
    <scope>SUBCELLULAR LOCATION</scope>
    <scope>TISSUE SPECIFICITY</scope>
    <scope>INTERACTION WITH MITOCHONDRIAL TARGETING SEQUENCES</scope>
</reference>
<organism>
    <name type="scientific">Rattus norvegicus</name>
    <name type="common">Rat</name>
    <dbReference type="NCBI Taxonomy" id="10116"/>
    <lineage>
        <taxon>Eukaryota</taxon>
        <taxon>Metazoa</taxon>
        <taxon>Chordata</taxon>
        <taxon>Craniata</taxon>
        <taxon>Vertebrata</taxon>
        <taxon>Euteleostomi</taxon>
        <taxon>Mammalia</taxon>
        <taxon>Eutheria</taxon>
        <taxon>Euarchontoglires</taxon>
        <taxon>Glires</taxon>
        <taxon>Rodentia</taxon>
        <taxon>Myomorpha</taxon>
        <taxon>Muroidea</taxon>
        <taxon>Muridae</taxon>
        <taxon>Murinae</taxon>
        <taxon>Rattus</taxon>
    </lineage>
</organism>
<feature type="chain" id="PRO_0000312687" description="Mitochondrial import receptor subunit TOM40B">
    <location>
        <begin position="1"/>
        <end position="308"/>
    </location>
</feature>
<feature type="region of interest" description="Required for mitochondrial targeting" evidence="3">
    <location>
        <begin position="281"/>
        <end position="308"/>
    </location>
</feature>
<sequence length="308" mass="34049">MGNTLGLAPMGTLPRWSHRREEPLPNPGSFDELHRLCKDVFPAQMEGVKLVVNKVLSSHFQVAHTVHMSALGLPGYHLHTAYAGDWQLSPTEVFPTVVGDMDSSGSLNAQVLLLLAERLRAKAVFQTQQAKFLTWQFDGEYRGDDYTATLTLGNPDLIGESVIMVAHFLQSITHRLVLGGELVYHRRPGEEGAILTLAGKYSALHWVATLNVGSGGAHASYYHKANEQVQVGVEFEANTRLQDTTFSFGYHLTLPQADMVFRGLVDSNWCVGAVLEKKMRPLPVTLALGAFLNHWRNRFHCGFSITVG</sequence>
<gene>
    <name evidence="1" type="primary">Tomm40l</name>
    <name evidence="5" type="synonym">Tomm40b</name>
</gene>
<name>TM40L_RAT</name>
<evidence type="ECO:0000250" key="1">
    <source>
        <dbReference type="UniProtKB" id="Q969M1"/>
    </source>
</evidence>
<evidence type="ECO:0000255" key="2"/>
<evidence type="ECO:0000269" key="3">
    <source>
    </source>
</evidence>
<evidence type="ECO:0000305" key="4"/>
<evidence type="ECO:0000312" key="5">
    <source>
        <dbReference type="EMBL" id="BAF49085.1"/>
    </source>
</evidence>